<sequence>MNIVDQQTFRDAMSCMGAAVNIITTDGPAGRAGFTASAVCSVTDTPPTLLVCLNRGASVWPVFNENRTLCVNTLSAGQESLSNLFGGKTPMEHRFAAARWQTGVTGCPQLGEALVSFDCRISQVVSVGTHDILFCAIEAIHRHATPYGLVWFDRSYHALMRPAC</sequence>
<keyword id="KW-0285">Flavoprotein</keyword>
<keyword id="KW-0288">FMN</keyword>
<keyword id="KW-0520">NAD</keyword>
<keyword id="KW-0560">Oxidoreductase</keyword>
<protein>
    <recommendedName>
        <fullName evidence="1">FMN reductase (NADH) RutF</fullName>
        <ecNumber evidence="1">1.5.1.42</ecNumber>
    </recommendedName>
    <alternativeName>
        <fullName evidence="1">FMN reductase</fullName>
    </alternativeName>
    <alternativeName>
        <fullName evidence="1">NADH-flavin reductase RutF</fullName>
    </alternativeName>
    <alternativeName>
        <fullName evidence="1">NADH:flavin oxidoreductase</fullName>
    </alternativeName>
</protein>
<evidence type="ECO:0000255" key="1">
    <source>
        <dbReference type="HAMAP-Rule" id="MF_00833"/>
    </source>
</evidence>
<accession>Q0TJ60</accession>
<reference key="1">
    <citation type="journal article" date="2006" name="Mol. Microbiol.">
        <title>Role of pathogenicity island-associated integrases in the genome plasticity of uropathogenic Escherichia coli strain 536.</title>
        <authorList>
            <person name="Hochhut B."/>
            <person name="Wilde C."/>
            <person name="Balling G."/>
            <person name="Middendorf B."/>
            <person name="Dobrindt U."/>
            <person name="Brzuszkiewicz E."/>
            <person name="Gottschalk G."/>
            <person name="Carniel E."/>
            <person name="Hacker J."/>
        </authorList>
    </citation>
    <scope>NUCLEOTIDE SEQUENCE [LARGE SCALE GENOMIC DNA]</scope>
    <source>
        <strain>536 / UPEC</strain>
    </source>
</reference>
<proteinExistence type="inferred from homology"/>
<feature type="chain" id="PRO_0000403023" description="FMN reductase (NADH) RutF">
    <location>
        <begin position="1"/>
        <end position="164"/>
    </location>
</feature>
<dbReference type="EC" id="1.5.1.42" evidence="1"/>
<dbReference type="EMBL" id="CP000247">
    <property type="protein sequence ID" value="ABG69019.1"/>
    <property type="molecule type" value="Genomic_DNA"/>
</dbReference>
<dbReference type="RefSeq" id="WP_001028104.1">
    <property type="nucleotide sequence ID" value="NC_008253.1"/>
</dbReference>
<dbReference type="SMR" id="Q0TJ60"/>
<dbReference type="KEGG" id="ecp:ECP_1006"/>
<dbReference type="HOGENOM" id="CLU_059021_2_2_6"/>
<dbReference type="Proteomes" id="UP000009182">
    <property type="component" value="Chromosome"/>
</dbReference>
<dbReference type="GO" id="GO:0010181">
    <property type="term" value="F:FMN binding"/>
    <property type="evidence" value="ECO:0007669"/>
    <property type="project" value="InterPro"/>
</dbReference>
<dbReference type="GO" id="GO:0052874">
    <property type="term" value="F:FMN reductase (NADH) activity"/>
    <property type="evidence" value="ECO:0007669"/>
    <property type="project" value="UniProtKB-EC"/>
</dbReference>
<dbReference type="GO" id="GO:0008752">
    <property type="term" value="F:FMN reductase [NAD(P)H] activity"/>
    <property type="evidence" value="ECO:0007669"/>
    <property type="project" value="InterPro"/>
</dbReference>
<dbReference type="GO" id="GO:0042602">
    <property type="term" value="F:riboflavin reductase (NADPH) activity"/>
    <property type="evidence" value="ECO:0007669"/>
    <property type="project" value="UniProtKB-UniRule"/>
</dbReference>
<dbReference type="GO" id="GO:0019740">
    <property type="term" value="P:nitrogen utilization"/>
    <property type="evidence" value="ECO:0007669"/>
    <property type="project" value="UniProtKB-UniRule"/>
</dbReference>
<dbReference type="GO" id="GO:0006212">
    <property type="term" value="P:uracil catabolic process"/>
    <property type="evidence" value="ECO:0007669"/>
    <property type="project" value="UniProtKB-UniRule"/>
</dbReference>
<dbReference type="FunFam" id="2.30.110.10:FF:000002">
    <property type="entry name" value="FMN reductase (NADH) RutF"/>
    <property type="match status" value="1"/>
</dbReference>
<dbReference type="Gene3D" id="2.30.110.10">
    <property type="entry name" value="Electron Transport, Fmn-binding Protein, Chain A"/>
    <property type="match status" value="1"/>
</dbReference>
<dbReference type="HAMAP" id="MF_00833">
    <property type="entry name" value="RutF"/>
    <property type="match status" value="1"/>
</dbReference>
<dbReference type="InterPro" id="IPR002563">
    <property type="entry name" value="Flavin_Rdtase-like_dom"/>
</dbReference>
<dbReference type="InterPro" id="IPR050268">
    <property type="entry name" value="NADH-dep_flavin_reductase"/>
</dbReference>
<dbReference type="InterPro" id="IPR019917">
    <property type="entry name" value="RutF"/>
</dbReference>
<dbReference type="InterPro" id="IPR012349">
    <property type="entry name" value="Split_barrel_FMN-bd"/>
</dbReference>
<dbReference type="NCBIfam" id="TIGR03615">
    <property type="entry name" value="RutF"/>
    <property type="match status" value="1"/>
</dbReference>
<dbReference type="PANTHER" id="PTHR30466">
    <property type="entry name" value="FLAVIN REDUCTASE"/>
    <property type="match status" value="1"/>
</dbReference>
<dbReference type="PANTHER" id="PTHR30466:SF1">
    <property type="entry name" value="FMN REDUCTASE (NADH) RUTF"/>
    <property type="match status" value="1"/>
</dbReference>
<dbReference type="Pfam" id="PF01613">
    <property type="entry name" value="Flavin_Reduct"/>
    <property type="match status" value="1"/>
</dbReference>
<dbReference type="SMART" id="SM00903">
    <property type="entry name" value="Flavin_Reduct"/>
    <property type="match status" value="1"/>
</dbReference>
<dbReference type="SUPFAM" id="SSF50475">
    <property type="entry name" value="FMN-binding split barrel"/>
    <property type="match status" value="1"/>
</dbReference>
<gene>
    <name evidence="1" type="primary">rutF</name>
    <name type="ordered locus">ECP_1006</name>
</gene>
<name>RUTF_ECOL5</name>
<organism>
    <name type="scientific">Escherichia coli O6:K15:H31 (strain 536 / UPEC)</name>
    <dbReference type="NCBI Taxonomy" id="362663"/>
    <lineage>
        <taxon>Bacteria</taxon>
        <taxon>Pseudomonadati</taxon>
        <taxon>Pseudomonadota</taxon>
        <taxon>Gammaproteobacteria</taxon>
        <taxon>Enterobacterales</taxon>
        <taxon>Enterobacteriaceae</taxon>
        <taxon>Escherichia</taxon>
    </lineage>
</organism>
<comment type="function">
    <text evidence="1">Catalyzes the reduction of FMN to FMNH2 which is used to reduce pyrimidine by RutA via the Rut pathway.</text>
</comment>
<comment type="catalytic activity">
    <reaction evidence="1">
        <text>FMNH2 + NAD(+) = FMN + NADH + 2 H(+)</text>
        <dbReference type="Rhea" id="RHEA:21620"/>
        <dbReference type="ChEBI" id="CHEBI:15378"/>
        <dbReference type="ChEBI" id="CHEBI:57540"/>
        <dbReference type="ChEBI" id="CHEBI:57618"/>
        <dbReference type="ChEBI" id="CHEBI:57945"/>
        <dbReference type="ChEBI" id="CHEBI:58210"/>
        <dbReference type="EC" id="1.5.1.42"/>
    </reaction>
</comment>
<comment type="induction">
    <text evidence="1">Up-regulated by the nitrogen regulatory protein C (NtrC also called GlnG) and repressed by RutR.</text>
</comment>
<comment type="similarity">
    <text evidence="1">Belongs to the non-flavoprotein flavin reductase family. RutF subfamily.</text>
</comment>